<sequence length="479" mass="53521">MNFETIIGLEVHVELNTNSKIFSPSSAHFGQEANANTNVIDWSFPGVLPVINKGVIDAGIKAALALNMDIHKKMHFDRKNYFYPDNPKAYQISQFDEPIGFNGWIDITLEDGTSKKIRIERAHLEEDAGKNTHGTDGYSYVDLNRQGVPLIEIVSEADMRSPEEAYAYLTALKEIIQYTGISDVKMEEGSMRVDANISLRPYGQKEFGTKTELKNLNSFSNVRKGLEFEVERQAKVLRSGGVIRQETRRYDEASKGTILMRVKEGAADYRYFPEPDLPLYEIDDVWIEEMRHELPQFPAQRRATYINDLGLSSYDANQLTATKAMSDFFEKAVALGGDAKQVSNWLQGEVAQYLNAEGKAIQEISLTPANLVEMIGIIADGTISSKIAKKVFVHLAKNGGSAREYVEKAGLVQISDPDVLIPIIHRVFEEQEAAVVDFKSGKRNADKAFTGFLMKATKGQANPQVAQQLLAQELQKLLD</sequence>
<protein>
    <recommendedName>
        <fullName evidence="1">Aspartyl/glutamyl-tRNA(Asn/Gln) amidotransferase subunit B</fullName>
        <shortName evidence="1">Asp/Glu-ADT subunit B</shortName>
        <ecNumber evidence="1">6.3.5.-</ecNumber>
    </recommendedName>
</protein>
<dbReference type="EC" id="6.3.5.-" evidence="1"/>
<dbReference type="EMBL" id="AM946015">
    <property type="protein sequence ID" value="CAR43251.1"/>
    <property type="molecule type" value="Genomic_DNA"/>
</dbReference>
<dbReference type="RefSeq" id="WP_015911825.1">
    <property type="nucleotide sequence ID" value="NC_012004.1"/>
</dbReference>
<dbReference type="SMR" id="B9DVG5"/>
<dbReference type="STRING" id="218495.SUB1516"/>
<dbReference type="KEGG" id="sub:SUB1516"/>
<dbReference type="eggNOG" id="COG0064">
    <property type="taxonomic scope" value="Bacteria"/>
</dbReference>
<dbReference type="HOGENOM" id="CLU_019240_0_0_9"/>
<dbReference type="OrthoDB" id="9804078at2"/>
<dbReference type="Proteomes" id="UP000000449">
    <property type="component" value="Chromosome"/>
</dbReference>
<dbReference type="GO" id="GO:0050566">
    <property type="term" value="F:asparaginyl-tRNA synthase (glutamine-hydrolyzing) activity"/>
    <property type="evidence" value="ECO:0007669"/>
    <property type="project" value="RHEA"/>
</dbReference>
<dbReference type="GO" id="GO:0005524">
    <property type="term" value="F:ATP binding"/>
    <property type="evidence" value="ECO:0007669"/>
    <property type="project" value="UniProtKB-KW"/>
</dbReference>
<dbReference type="GO" id="GO:0050567">
    <property type="term" value="F:glutaminyl-tRNA synthase (glutamine-hydrolyzing) activity"/>
    <property type="evidence" value="ECO:0007669"/>
    <property type="project" value="UniProtKB-UniRule"/>
</dbReference>
<dbReference type="GO" id="GO:0070681">
    <property type="term" value="P:glutaminyl-tRNAGln biosynthesis via transamidation"/>
    <property type="evidence" value="ECO:0007669"/>
    <property type="project" value="TreeGrafter"/>
</dbReference>
<dbReference type="GO" id="GO:0006412">
    <property type="term" value="P:translation"/>
    <property type="evidence" value="ECO:0007669"/>
    <property type="project" value="UniProtKB-UniRule"/>
</dbReference>
<dbReference type="FunFam" id="1.10.10.410:FF:000001">
    <property type="entry name" value="Aspartyl/glutamyl-tRNA(Asn/Gln) amidotransferase subunit B"/>
    <property type="match status" value="1"/>
</dbReference>
<dbReference type="FunFam" id="1.10.150.380:FF:000001">
    <property type="entry name" value="Aspartyl/glutamyl-tRNA(Asn/Gln) amidotransferase subunit B"/>
    <property type="match status" value="1"/>
</dbReference>
<dbReference type="Gene3D" id="1.10.10.410">
    <property type="match status" value="1"/>
</dbReference>
<dbReference type="Gene3D" id="1.10.150.380">
    <property type="entry name" value="GatB domain, N-terminal subdomain"/>
    <property type="match status" value="1"/>
</dbReference>
<dbReference type="HAMAP" id="MF_00121">
    <property type="entry name" value="GatB"/>
    <property type="match status" value="1"/>
</dbReference>
<dbReference type="InterPro" id="IPR017959">
    <property type="entry name" value="Asn/Gln-tRNA_amidoTrfase_suB/E"/>
</dbReference>
<dbReference type="InterPro" id="IPR006075">
    <property type="entry name" value="Asn/Gln-tRNA_Trfase_suB/E_cat"/>
</dbReference>
<dbReference type="InterPro" id="IPR018027">
    <property type="entry name" value="Asn/Gln_amidotransferase"/>
</dbReference>
<dbReference type="InterPro" id="IPR003789">
    <property type="entry name" value="Asn/Gln_tRNA_amidoTrase-B-like"/>
</dbReference>
<dbReference type="InterPro" id="IPR004413">
    <property type="entry name" value="GatB"/>
</dbReference>
<dbReference type="InterPro" id="IPR042114">
    <property type="entry name" value="GatB_C_1"/>
</dbReference>
<dbReference type="InterPro" id="IPR023168">
    <property type="entry name" value="GatB_Yqey_C_2"/>
</dbReference>
<dbReference type="InterPro" id="IPR017958">
    <property type="entry name" value="Gln-tRNA_amidoTrfase_suB_CS"/>
</dbReference>
<dbReference type="InterPro" id="IPR014746">
    <property type="entry name" value="Gln_synth/guanido_kin_cat_dom"/>
</dbReference>
<dbReference type="NCBIfam" id="TIGR00133">
    <property type="entry name" value="gatB"/>
    <property type="match status" value="1"/>
</dbReference>
<dbReference type="NCBIfam" id="NF004011">
    <property type="entry name" value="PRK05477.1-1"/>
    <property type="match status" value="1"/>
</dbReference>
<dbReference type="NCBIfam" id="NF004012">
    <property type="entry name" value="PRK05477.1-2"/>
    <property type="match status" value="1"/>
</dbReference>
<dbReference type="NCBIfam" id="NF004014">
    <property type="entry name" value="PRK05477.1-4"/>
    <property type="match status" value="1"/>
</dbReference>
<dbReference type="PANTHER" id="PTHR11659">
    <property type="entry name" value="GLUTAMYL-TRNA GLN AMIDOTRANSFERASE SUBUNIT B MITOCHONDRIAL AND PROKARYOTIC PET112-RELATED"/>
    <property type="match status" value="1"/>
</dbReference>
<dbReference type="PANTHER" id="PTHR11659:SF0">
    <property type="entry name" value="GLUTAMYL-TRNA(GLN) AMIDOTRANSFERASE SUBUNIT B, MITOCHONDRIAL"/>
    <property type="match status" value="1"/>
</dbReference>
<dbReference type="Pfam" id="PF02934">
    <property type="entry name" value="GatB_N"/>
    <property type="match status" value="1"/>
</dbReference>
<dbReference type="Pfam" id="PF02637">
    <property type="entry name" value="GatB_Yqey"/>
    <property type="match status" value="1"/>
</dbReference>
<dbReference type="SMART" id="SM00845">
    <property type="entry name" value="GatB_Yqey"/>
    <property type="match status" value="1"/>
</dbReference>
<dbReference type="SUPFAM" id="SSF89095">
    <property type="entry name" value="GatB/YqeY motif"/>
    <property type="match status" value="1"/>
</dbReference>
<dbReference type="SUPFAM" id="SSF55931">
    <property type="entry name" value="Glutamine synthetase/guanido kinase"/>
    <property type="match status" value="1"/>
</dbReference>
<dbReference type="PROSITE" id="PS01234">
    <property type="entry name" value="GATB"/>
    <property type="match status" value="1"/>
</dbReference>
<accession>B9DVG5</accession>
<keyword id="KW-0067">ATP-binding</keyword>
<keyword id="KW-0436">Ligase</keyword>
<keyword id="KW-0547">Nucleotide-binding</keyword>
<keyword id="KW-0648">Protein biosynthesis</keyword>
<keyword id="KW-1185">Reference proteome</keyword>
<evidence type="ECO:0000255" key="1">
    <source>
        <dbReference type="HAMAP-Rule" id="MF_00121"/>
    </source>
</evidence>
<name>GATB_STRU0</name>
<reference key="1">
    <citation type="journal article" date="2009" name="BMC Genomics">
        <title>Evidence for niche adaptation in the genome of the bovine pathogen Streptococcus uberis.</title>
        <authorList>
            <person name="Ward P.N."/>
            <person name="Holden M.T.G."/>
            <person name="Leigh J.A."/>
            <person name="Lennard N."/>
            <person name="Bignell A."/>
            <person name="Barron A."/>
            <person name="Clark L."/>
            <person name="Quail M.A."/>
            <person name="Woodward J."/>
            <person name="Barrell B.G."/>
            <person name="Egan S.A."/>
            <person name="Field T.R."/>
            <person name="Maskell D."/>
            <person name="Kehoe M."/>
            <person name="Dowson C.G."/>
            <person name="Chanter N."/>
            <person name="Whatmore A.M."/>
            <person name="Bentley S.D."/>
            <person name="Parkhill J."/>
        </authorList>
    </citation>
    <scope>NUCLEOTIDE SEQUENCE [LARGE SCALE GENOMIC DNA]</scope>
    <source>
        <strain>ATCC BAA-854 / 0140J</strain>
    </source>
</reference>
<gene>
    <name evidence="1" type="primary">gatB</name>
    <name type="ordered locus">SUB1516</name>
</gene>
<comment type="function">
    <text evidence="1">Allows the formation of correctly charged Asn-tRNA(Asn) or Gln-tRNA(Gln) through the transamidation of misacylated Asp-tRNA(Asn) or Glu-tRNA(Gln) in organisms which lack either or both of asparaginyl-tRNA or glutaminyl-tRNA synthetases. The reaction takes place in the presence of glutamine and ATP through an activated phospho-Asp-tRNA(Asn) or phospho-Glu-tRNA(Gln).</text>
</comment>
<comment type="catalytic activity">
    <reaction evidence="1">
        <text>L-glutamyl-tRNA(Gln) + L-glutamine + ATP + H2O = L-glutaminyl-tRNA(Gln) + L-glutamate + ADP + phosphate + H(+)</text>
        <dbReference type="Rhea" id="RHEA:17521"/>
        <dbReference type="Rhea" id="RHEA-COMP:9681"/>
        <dbReference type="Rhea" id="RHEA-COMP:9684"/>
        <dbReference type="ChEBI" id="CHEBI:15377"/>
        <dbReference type="ChEBI" id="CHEBI:15378"/>
        <dbReference type="ChEBI" id="CHEBI:29985"/>
        <dbReference type="ChEBI" id="CHEBI:30616"/>
        <dbReference type="ChEBI" id="CHEBI:43474"/>
        <dbReference type="ChEBI" id="CHEBI:58359"/>
        <dbReference type="ChEBI" id="CHEBI:78520"/>
        <dbReference type="ChEBI" id="CHEBI:78521"/>
        <dbReference type="ChEBI" id="CHEBI:456216"/>
    </reaction>
</comment>
<comment type="catalytic activity">
    <reaction evidence="1">
        <text>L-aspartyl-tRNA(Asn) + L-glutamine + ATP + H2O = L-asparaginyl-tRNA(Asn) + L-glutamate + ADP + phosphate + 2 H(+)</text>
        <dbReference type="Rhea" id="RHEA:14513"/>
        <dbReference type="Rhea" id="RHEA-COMP:9674"/>
        <dbReference type="Rhea" id="RHEA-COMP:9677"/>
        <dbReference type="ChEBI" id="CHEBI:15377"/>
        <dbReference type="ChEBI" id="CHEBI:15378"/>
        <dbReference type="ChEBI" id="CHEBI:29985"/>
        <dbReference type="ChEBI" id="CHEBI:30616"/>
        <dbReference type="ChEBI" id="CHEBI:43474"/>
        <dbReference type="ChEBI" id="CHEBI:58359"/>
        <dbReference type="ChEBI" id="CHEBI:78515"/>
        <dbReference type="ChEBI" id="CHEBI:78516"/>
        <dbReference type="ChEBI" id="CHEBI:456216"/>
    </reaction>
</comment>
<comment type="subunit">
    <text evidence="1">Heterotrimer of A, B and C subunits.</text>
</comment>
<comment type="similarity">
    <text evidence="1">Belongs to the GatB/GatE family. GatB subfamily.</text>
</comment>
<proteinExistence type="inferred from homology"/>
<feature type="chain" id="PRO_1000122538" description="Aspartyl/glutamyl-tRNA(Asn/Gln) amidotransferase subunit B">
    <location>
        <begin position="1"/>
        <end position="479"/>
    </location>
</feature>
<organism>
    <name type="scientific">Streptococcus uberis (strain ATCC BAA-854 / 0140J)</name>
    <dbReference type="NCBI Taxonomy" id="218495"/>
    <lineage>
        <taxon>Bacteria</taxon>
        <taxon>Bacillati</taxon>
        <taxon>Bacillota</taxon>
        <taxon>Bacilli</taxon>
        <taxon>Lactobacillales</taxon>
        <taxon>Streptococcaceae</taxon>
        <taxon>Streptococcus</taxon>
    </lineage>
</organism>